<gene>
    <name type="primary">gag</name>
</gene>
<evidence type="ECO:0000250" key="1"/>
<evidence type="ECO:0000250" key="2">
    <source>
        <dbReference type="UniProtKB" id="P03347"/>
    </source>
</evidence>
<evidence type="ECO:0000250" key="3">
    <source>
        <dbReference type="UniProtKB" id="P03348"/>
    </source>
</evidence>
<evidence type="ECO:0000250" key="4">
    <source>
        <dbReference type="UniProtKB" id="P04591"/>
    </source>
</evidence>
<evidence type="ECO:0000250" key="5">
    <source>
        <dbReference type="UniProtKB" id="P12493"/>
    </source>
</evidence>
<evidence type="ECO:0000250" key="6">
    <source>
        <dbReference type="UniProtKB" id="P12497"/>
    </source>
</evidence>
<evidence type="ECO:0000255" key="7">
    <source>
        <dbReference type="PROSITE-ProRule" id="PRU00047"/>
    </source>
</evidence>
<evidence type="ECO:0000256" key="8">
    <source>
        <dbReference type="SAM" id="MobiDB-lite"/>
    </source>
</evidence>
<evidence type="ECO:0000269" key="9">
    <source>
    </source>
</evidence>
<evidence type="ECO:0000305" key="10"/>
<organism>
    <name type="scientific">Human immunodeficiency virus type 1 group M subtype B (isolate ARV2/SF2)</name>
    <name type="common">HIV-1</name>
    <dbReference type="NCBI Taxonomy" id="11685"/>
    <lineage>
        <taxon>Viruses</taxon>
        <taxon>Riboviria</taxon>
        <taxon>Pararnavirae</taxon>
        <taxon>Artverviricota</taxon>
        <taxon>Revtraviricetes</taxon>
        <taxon>Ortervirales</taxon>
        <taxon>Retroviridae</taxon>
        <taxon>Orthoretrovirinae</taxon>
        <taxon>Lentivirus</taxon>
        <taxon>Human immunodeficiency virus type 1</taxon>
    </lineage>
</organism>
<accession>P03349</accession>
<name>GAG_HV1A2</name>
<keyword id="KW-0002">3D-structure</keyword>
<keyword id="KW-0014">AIDS</keyword>
<keyword id="KW-0167">Capsid protein</keyword>
<keyword id="KW-1032">Host cell membrane</keyword>
<keyword id="KW-1035">Host cytoplasm</keyword>
<keyword id="KW-1039">Host endosome</keyword>
<keyword id="KW-1043">Host membrane</keyword>
<keyword id="KW-1048">Host nucleus</keyword>
<keyword id="KW-0945">Host-virus interaction</keyword>
<keyword id="KW-0449">Lipoprotein</keyword>
<keyword id="KW-0472">Membrane</keyword>
<keyword id="KW-0479">Metal-binding</keyword>
<keyword id="KW-0488">Methylation</keyword>
<keyword id="KW-0519">Myristate</keyword>
<keyword id="KW-0597">Phosphoprotein</keyword>
<keyword id="KW-1185">Reference proteome</keyword>
<keyword id="KW-0677">Repeat</keyword>
<keyword id="KW-0688">Ribosomal frameshifting</keyword>
<keyword id="KW-0694">RNA-binding</keyword>
<keyword id="KW-1198">Viral budding</keyword>
<keyword id="KW-1187">Viral budding via the host ESCRT complexes</keyword>
<keyword id="KW-0543">Viral nucleoprotein</keyword>
<keyword id="KW-1188">Viral release from host cell</keyword>
<keyword id="KW-0946">Virion</keyword>
<keyword id="KW-0862">Zinc</keyword>
<keyword id="KW-0863">Zinc-finger</keyword>
<feature type="initiator methionine" description="Removed; by host" evidence="1">
    <location>
        <position position="1"/>
    </location>
</feature>
<feature type="chain" id="PRO_0000261208" description="Gag polyprotein">
    <location>
        <begin position="2"/>
        <end position="502"/>
    </location>
</feature>
<feature type="chain" id="PRO_0000038505" description="Matrix protein p17" evidence="1">
    <location>
        <begin position="2"/>
        <end position="134"/>
    </location>
</feature>
<feature type="chain" id="PRO_0000038506" description="Capsid protein p24" evidence="1">
    <location>
        <begin position="135"/>
        <end position="365"/>
    </location>
</feature>
<feature type="peptide" id="PRO_0000038507" description="Spacer peptide 1" evidence="1">
    <location>
        <begin position="366"/>
        <end position="379"/>
    </location>
</feature>
<feature type="chain" id="PRO_0000038508" description="Nucleocapsid protein p7" evidence="1">
    <location>
        <begin position="380"/>
        <end position="434"/>
    </location>
</feature>
<feature type="peptide" id="PRO_0000038509" description="Spacer peptide 2" evidence="1">
    <location>
        <begin position="435"/>
        <end position="450"/>
    </location>
</feature>
<feature type="chain" id="PRO_0000038510" description="p6-gag" evidence="1">
    <location>
        <begin position="451"/>
        <end position="502"/>
    </location>
</feature>
<feature type="zinc finger region" description="CCHC-type 1" evidence="7">
    <location>
        <begin position="392"/>
        <end position="409"/>
    </location>
</feature>
<feature type="zinc finger region" description="CCHC-type 2" evidence="7">
    <location>
        <begin position="413"/>
        <end position="430"/>
    </location>
</feature>
<feature type="region of interest" description="Interaction with Gp41" evidence="5">
    <location>
        <begin position="7"/>
        <end position="31"/>
    </location>
</feature>
<feature type="region of interest" description="Interaction with host CALM1" evidence="4">
    <location>
        <begin position="8"/>
        <end position="43"/>
    </location>
</feature>
<feature type="region of interest" description="Interaction with host AP3D1" evidence="6">
    <location>
        <begin position="12"/>
        <end position="19"/>
    </location>
</feature>
<feature type="region of interest" description="Interaction with membrane phosphatidylinositol 4,5-bisphosphate and RNA" evidence="5">
    <location>
        <begin position="14"/>
        <end position="33"/>
    </location>
</feature>
<feature type="region of interest" description="Interaction with membrane phosphatidylinositol 4,5-bisphosphate" evidence="5">
    <location>
        <begin position="73"/>
        <end position="77"/>
    </location>
</feature>
<feature type="region of interest" description="Disordered" evidence="8">
    <location>
        <begin position="106"/>
        <end position="129"/>
    </location>
</feature>
<feature type="region of interest" description="Interaction with host PPIA/CYPA and NUP153" evidence="5">
    <location>
        <begin position="191"/>
        <end position="229"/>
    </location>
</feature>
<feature type="region of interest" description="PPIA/CYPA-binding loop" evidence="4">
    <location>
        <begin position="219"/>
        <end position="227"/>
    </location>
</feature>
<feature type="region of interest" description="Dimerization/Multimerization of capsid protein p24" evidence="4">
    <location>
        <begin position="279"/>
        <end position="365"/>
    </location>
</feature>
<feature type="region of interest" description="Disordered" evidence="8">
    <location>
        <begin position="446"/>
        <end position="502"/>
    </location>
</feature>
<feature type="short sequence motif" description="Nuclear export signal" evidence="1">
    <location>
        <begin position="16"/>
        <end position="22"/>
    </location>
</feature>
<feature type="short sequence motif" description="Nuclear localization signal" evidence="1">
    <location>
        <begin position="26"/>
        <end position="32"/>
    </location>
</feature>
<feature type="short sequence motif" description="PTAP/PSAP motif">
    <location>
        <begin position="457"/>
        <end position="460"/>
    </location>
</feature>
<feature type="short sequence motif" description="LYPX(n)L motif">
    <location>
        <begin position="485"/>
        <end position="494"/>
    </location>
</feature>
<feature type="compositionally biased region" description="Basic and acidic residues" evidence="8">
    <location>
        <begin position="463"/>
        <end position="472"/>
    </location>
</feature>
<feature type="site" description="Cleavage; by viral protease" evidence="1">
    <location>
        <begin position="134"/>
        <end position="135"/>
    </location>
</feature>
<feature type="site" description="Cleavage; by viral protease" evidence="1">
    <location>
        <begin position="365"/>
        <end position="366"/>
    </location>
</feature>
<feature type="site" description="Cleavage; by viral protease" evidence="1">
    <location>
        <begin position="379"/>
        <end position="380"/>
    </location>
</feature>
<feature type="site" description="Cleavage; by viral protease" evidence="1">
    <location>
        <begin position="434"/>
        <end position="435"/>
    </location>
</feature>
<feature type="site" description="Cleavage; by viral protease" evidence="1">
    <location>
        <begin position="450"/>
        <end position="451"/>
    </location>
</feature>
<feature type="modified residue" description="Phosphoserine; by host MAPK1" evidence="5">
    <location>
        <position position="150"/>
    </location>
</feature>
<feature type="modified residue" description="Asymmetric dimethylarginine; in Nucleocapsid protein p7; by host PRMT6" evidence="1">
    <location>
        <position position="389"/>
    </location>
</feature>
<feature type="modified residue" description="Asymmetric dimethylarginine; in Nucleocapsid protein p7; by host PRMT6" evidence="1">
    <location>
        <position position="411"/>
    </location>
</feature>
<feature type="lipid moiety-binding region" description="N-myristoyl glycine; by host" evidence="1">
    <location>
        <position position="2"/>
    </location>
</feature>
<feature type="mutagenesis site" description="No effect on host PACSIN2 incorporation into virions." evidence="9">
    <original>T</original>
    <variation>G</variation>
    <location>
        <position position="458"/>
    </location>
</feature>
<feature type="mutagenesis site" description="No effect on host PACSIN2 incorporation into virions." evidence="9">
    <original>L</original>
    <variation>A</variation>
    <location>
        <position position="491"/>
    </location>
</feature>
<feature type="mutagenesis site" description="Slight decrease in host PACSIN2 incorporation into virions." evidence="9">
    <original>L</original>
    <variation>P</variation>
    <location>
        <position position="494"/>
    </location>
</feature>
<feature type="mutagenesis site" description="Slight decrease in host PACSIN2 incorporation into virions." evidence="9">
    <original>F</original>
    <variation>S</variation>
    <location>
        <position position="495"/>
    </location>
</feature>
<sequence>MGARASVLSGGELDKWEKIRLRPGGKKKYKLKHIVWASRELERFAVNPGLLETSEGCRQILGQLQPSLQTGSEELRSLYNTVATLYCVHQRIDVKDTKEALEKIEEEQNKSKKKAQQAAAAAGTGNSSQVSQNYPIVQNLQGQMVHQAISPRTLNAWVKVVEEKAFSPEVIPMFSALSEGATPQDLNTMLNTVGGHQAAMQMLKETINEEAAEWDRVHPVHAGPIAPGQMREPRGSDIAGTTSTLQEQIGWMTNNPPIPVGEIYKRWIILGLNKIVRMYSPTSILDIRQGPKEPFRDYVDRFYKTLRAEQASQDVKNWMTETLLVQNANPDCKTILKALGPAATLEEMMTACQGVGGPGHKARVLAEAMSQVTNPANIMMQRGNFRNQRKTVKCFNCGKEGHIAKNCRAPRKKGCWRCGREGHQMKDCTERQANFLGKIWPSYKGRPGNFLQSRPEPTAPPEESFRFGEEKTTPSQKQEPIDKELYPLTSLRSLFGNDPSSQ</sequence>
<reference key="1">
    <citation type="journal article" date="1985" name="Science">
        <title>Nucleotide sequence and expression of an AIDS-associated retrovirus (ARV-2).</title>
        <authorList>
            <person name="Sanchez-Pescador R."/>
            <person name="Power M.D."/>
            <person name="Barr P.J."/>
            <person name="Steimer K.S."/>
            <person name="Stempien M.M."/>
            <person name="Brown-Shimer S.L."/>
            <person name="Gee W.W."/>
            <person name="Renard A."/>
            <person name="Randolph A."/>
            <person name="Levy J.A."/>
            <person name="Dina D."/>
            <person name="Luciw P.A."/>
        </authorList>
    </citation>
    <scope>NUCLEOTIDE SEQUENCE [GENOMIC RNA]</scope>
</reference>
<reference key="2">
    <citation type="journal article" date="2003" name="Biochim. Biophys. Acta">
        <title>Role of HIV-1 Gag domains in viral assembly.</title>
        <authorList>
            <person name="Scarlata S."/>
            <person name="Carter C."/>
        </authorList>
    </citation>
    <scope>REVIEW</scope>
</reference>
<reference key="3">
    <citation type="journal article" date="2018" name="Proc. Natl. Acad. Sci. U.S.A.">
        <title>HIV-1 gag recruits PACSIN2 to promote virus spreading.</title>
        <authorList>
            <person name="Popov S."/>
            <person name="Popova E."/>
            <person name="Inoue M."/>
            <person name="Wu Y."/>
            <person name="Goettlinger H."/>
        </authorList>
    </citation>
    <scope>INTERACTION WITH HOST PACSIN2</scope>
    <scope>MUTAGENESIS OF THR-458; LEU-491; LEU-494 AND PHE-495</scope>
</reference>
<comment type="function">
    <molecule>Gag polyprotein</molecule>
    <text evidence="4">Mediates, with Gag-Pol polyprotein, the essential events in virion assembly, including binding the plasma membrane, making the protein-protein interactions necessary to create spherical particles, recruiting the viral Env proteins, and packaging the genomic RNA via direct interactions with the RNA packaging sequence (Psi).</text>
</comment>
<comment type="function">
    <molecule>Matrix protein p17</molecule>
    <text evidence="1 5">Targets the polyprotein to the plasma membrane via a multipartite membrane-binding signal, that includes its myristoylated N-terminus (By similarity). Matrix protein is part of the pre-integration complex. Implicated in the release from host cell mediated by Vpu. Binds to RNA (By similarity).</text>
</comment>
<comment type="function">
    <molecule>Capsid protein p24</molecule>
    <text evidence="4 5">Forms the conical core that encapsulates the genomic RNA-nucleocapsid complex in the virion. Most core are conical, with only 7% tubular. The core is constituted by capsid protein hexamer subunits. The core is disassembled soon after virion entry (By similarity). The capsid promotes immune invasion by cloaking viral DNA from CGAS detection (By similarity). Host restriction factors such as TRIM5-alpha or TRIMCyp bind retroviral capsids and cause premature capsid disassembly, leading to blocks in reverse transcription. Capsid restriction by TRIM5 is one of the factors which restricts HIV-1 to the human species. Host PIN1 apparently facilitates the virion uncoating (By similarity). On the other hand, interactions with PDZD8 or CYPA stabilize the capsid (By similarity).</text>
</comment>
<comment type="function">
    <molecule>Nucleocapsid protein p7</molecule>
    <text evidence="4">Encapsulates and protects viral dimeric unspliced genomic RNA (gRNA). Binds these RNAs through its zinc fingers. Acts as a nucleic acid chaperone which is involved in rearangement of nucleic acid secondary structure during gRNA retrotranscription. Also facilitates template switch leading to recombination. As part of the polyprotein, participates in gRNA dimerization, packaging, tRNA incorporation and virion assembly.</text>
</comment>
<comment type="function">
    <molecule>p6-gag</molecule>
    <text evidence="5">Plays a role in budding of the assembled particle by interacting with the host class E VPS proteins TSG101 and PDCD6IP/AIP1.</text>
</comment>
<comment type="subunit">
    <molecule>Gag polyprotein</molecule>
    <text evidence="4 9">Homotrimer; further assembles as hexamers of trimers (By similarity). Oligomerization possibly creates a central hole into which the cytoplasmic tail of the gp41 envelope protein may be inserted. Interacts with host TRIM22; this interaction seems to disrupt proper trafficking of Gag polyprotein and may interfere with budding (By similarity). Interacts with host PDZD8 (By similarity). When ubiquitinated, interacts (via p6-gag domain) with host PACSIN2; this interaction allows PACSIN2 recruitment to viral assembly sites and its subsequent incorporation into virions (PubMed:29891700). Interacts with MOV10 (By similarity).</text>
</comment>
<comment type="subunit">
    <molecule>Matrix protein p17</molecule>
    <text evidence="4 5">Homotrimer; further assembles as hexamers of trimers. Interacts with gp41 (via C-terminus). Interacts with host CALM1; this interaction induces a conformational change in the Matrix protein, triggering exposure of the myristate group. Interacts with host AP3D1; this interaction allows the polyprotein trafficking to multivesicular bodies during virus assembly. Part of the pre-integration complex (PIC) which is composed of viral genome, matrix protein, Vpr and integrase.</text>
</comment>
<comment type="subunit">
    <molecule>Capsid protein p24</molecule>
    <text evidence="4 5">Homodimer; the homodimer further multimerizes as homohexamers or homopentamers (By similarity). Interacts with host NUP98 (By similarity). Interacts with host PPIA/CYPA; this interaction stabilizes the capsid (By similarity). Interacts with host NUP153 (By similarity). Interacts with host PDZD8; this interaction stabilizes the capsid. Interacts with host TRIM5; this interaction destabilizes the capsid (By similarity). Interacts with host CPSF6 (By similarity). Interacts with host NONO; the interaction is weak (By similarity).</text>
</comment>
<comment type="subunit">
    <molecule>Nucleocapsid protein p7</molecule>
    <text evidence="5">Interacts with host NUP98.</text>
</comment>
<comment type="subunit">
    <molecule>p6-gag</molecule>
    <text evidence="3 5">Interacts with Vpr; this interaction allows Vpr incorporation into the virion (By similarity). Interacts with host TSG101 (By similarity). Interacts with host PDCD6IP/AIP1 (By similarity).</text>
</comment>
<comment type="subcellular location">
    <molecule>Gag polyprotein</molecule>
    <subcellularLocation>
        <location evidence="5">Host cell membrane</location>
        <topology evidence="5">Lipid-anchor</topology>
    </subcellularLocation>
    <subcellularLocation>
        <location evidence="5">Host endosome</location>
        <location evidence="5">Host multivesicular body</location>
    </subcellularLocation>
    <text evidence="5">These locations are probably linked to virus assembly sites. The main location is the cell membrane, but under some circumstances, late endosomal compartments can serve as productive sites for virion assembly.</text>
</comment>
<comment type="subcellular location">
    <molecule>Matrix protein p17</molecule>
    <subcellularLocation>
        <location evidence="5">Virion membrane</location>
        <topology evidence="5">Lipid-anchor</topology>
    </subcellularLocation>
    <subcellularLocation>
        <location evidence="1">Host nucleus</location>
    </subcellularLocation>
    <subcellularLocation>
        <location evidence="1">Host cytoplasm</location>
    </subcellularLocation>
</comment>
<comment type="subcellular location">
    <molecule>Capsid protein p24</molecule>
    <subcellularLocation>
        <location evidence="5">Virion</location>
    </subcellularLocation>
</comment>
<comment type="subcellular location">
    <molecule>Nucleocapsid protein p7</molecule>
    <subcellularLocation>
        <location evidence="5">Virion</location>
    </subcellularLocation>
</comment>
<comment type="alternative products">
    <event type="ribosomal frameshifting"/>
    <isoform>
        <id>P03349-1</id>
        <name>Gag polyprotein</name>
        <sequence type="displayed"/>
    </isoform>
    <isoform>
        <id>P03369-1</id>
        <name>Gag-Pol polyprotein</name>
        <sequence type="external"/>
    </isoform>
    <text>Translation results in the formation of the Gag polyprotein most of the time. Ribosomal frameshifting at the gag-pol genes boundary occurs at low frequency and produces the Gag-Pol polyprotein. This strategy of translation probably allows the virus to modulate the quantity of each viral protein. Maintenance of a correct Gag to Gag-Pol ratio is essential for RNA dimerization and viral infectivity.</text>
</comment>
<comment type="domain">
    <text evidence="5">Late-budding domains (L domains) are short sequence motifs essential for viral particle budding. They recruit proteins of the host ESCRT machinery (Endosomal Sorting Complex Required for Transport) or ESCRT-associated proteins. p6-gag contains two L domains: a PTAP/PSAP motif, which interacts with the UEV domain of TSG101 and a LYPX(n)L motif which interacts with PDCD6IP/AIP1.</text>
</comment>
<comment type="PTM">
    <text evidence="5">Gag-Pol polyprotein: Specific enzymatic cleavages by the viral protease yield mature proteins.</text>
</comment>
<comment type="PTM">
    <molecule>Matrix protein p17</molecule>
    <text evidence="4">Tyrosine phosphorylated presumably in the virion by a host kinase. Phosphorylation is apparently not a major regulator of membrane association.</text>
</comment>
<comment type="PTM">
    <text evidence="5">Capsid protein p24 is phosphorylated possibly by host MAPK1; this phosphorylation is necessary for Pin1-mediated virion uncoating.</text>
</comment>
<comment type="PTM">
    <text evidence="2">Nucleocapsid protein p7 is methylated by host PRMT6, impairing its function by reducing RNA annealing and the initiation of reverse transcription.</text>
</comment>
<comment type="miscellaneous">
    <text>HIV-1 lineages are divided in three main groups, M (for Major), O (for Outlier), and N (for New, or Non-M, Non-O). The vast majority of strains found worldwide belong to the group M. Group O seems to be endemic to and largely confined to Cameroon and neighboring countries in West Central Africa, where these viruses represent a small minority of HIV-1 strains. The group N is represented by a limited number of isolates from Cameroonian persons. The group M is further subdivided in 9 clades or subtypes (A to D, F to H, J and K).</text>
</comment>
<comment type="miscellaneous">
    <molecule>Isoform Gag polyprotein</molecule>
    <text>Produced by conventional translation.</text>
</comment>
<comment type="similarity">
    <text evidence="10">Belongs to the primate lentivirus group gag polyprotein family.</text>
</comment>
<organismHost>
    <name type="scientific">Homo sapiens</name>
    <name type="common">Human</name>
    <dbReference type="NCBI Taxonomy" id="9606"/>
</organismHost>
<dbReference type="EMBL" id="K02007">
    <property type="protein sequence ID" value="AAB59875.1"/>
    <property type="molecule type" value="Genomic_RNA"/>
</dbReference>
<dbReference type="PIR" id="A03947">
    <property type="entry name" value="FOVWA2"/>
</dbReference>
<dbReference type="PDB" id="4OBD">
    <property type="method" value="X-ray"/>
    <property type="resolution" value="1.90 A"/>
    <property type="chains" value="E/F=446-455"/>
</dbReference>
<dbReference type="PDB" id="4OBF">
    <property type="method" value="X-ray"/>
    <property type="resolution" value="1.68 A"/>
    <property type="chains" value="E/F=446-455"/>
</dbReference>
<dbReference type="PDB" id="4OBG">
    <property type="method" value="X-ray"/>
    <property type="resolution" value="1.78 A"/>
    <property type="chains" value="E/F=446-455"/>
</dbReference>
<dbReference type="PDB" id="4OBH">
    <property type="method" value="X-ray"/>
    <property type="resolution" value="1.85 A"/>
    <property type="chains" value="E/F=446-455"/>
</dbReference>
<dbReference type="PDB" id="4OBJ">
    <property type="method" value="X-ray"/>
    <property type="resolution" value="1.75 A"/>
    <property type="chains" value="C=446-455"/>
</dbReference>
<dbReference type="PDB" id="4OBK">
    <property type="method" value="X-ray"/>
    <property type="resolution" value="1.65 A"/>
    <property type="chains" value="C=446-455"/>
</dbReference>
<dbReference type="PDB" id="4QJ2">
    <property type="method" value="X-ray"/>
    <property type="resolution" value="2.13 A"/>
    <property type="chains" value="F/G=446-455"/>
</dbReference>
<dbReference type="PDB" id="4QJ6">
    <property type="method" value="X-ray"/>
    <property type="resolution" value="1.50 A"/>
    <property type="chains" value="E/F=446-455"/>
</dbReference>
<dbReference type="PDB" id="4QJ7">
    <property type="method" value="X-ray"/>
    <property type="resolution" value="1.67 A"/>
    <property type="chains" value="F/G=446-453"/>
</dbReference>
<dbReference type="PDB" id="4QJ8">
    <property type="method" value="X-ray"/>
    <property type="resolution" value="2.00 A"/>
    <property type="chains" value="E/F=446-454"/>
</dbReference>
<dbReference type="PDB" id="4QJ9">
    <property type="method" value="X-ray"/>
    <property type="resolution" value="1.83 A"/>
    <property type="chains" value="G=446-453"/>
</dbReference>
<dbReference type="PDB" id="4QJA">
    <property type="method" value="X-ray"/>
    <property type="resolution" value="1.54 A"/>
    <property type="chains" value="P=446-454"/>
</dbReference>
<dbReference type="PDBsum" id="4OBD"/>
<dbReference type="PDBsum" id="4OBF"/>
<dbReference type="PDBsum" id="4OBG"/>
<dbReference type="PDBsum" id="4OBH"/>
<dbReference type="PDBsum" id="4OBJ"/>
<dbReference type="PDBsum" id="4OBK"/>
<dbReference type="PDBsum" id="4QJ2"/>
<dbReference type="PDBsum" id="4QJ6"/>
<dbReference type="PDBsum" id="4QJ7"/>
<dbReference type="PDBsum" id="4QJ8"/>
<dbReference type="PDBsum" id="4QJ9"/>
<dbReference type="PDBsum" id="4QJA"/>
<dbReference type="BMRB" id="P03349"/>
<dbReference type="SMR" id="P03349"/>
<dbReference type="EvolutionaryTrace" id="P03349"/>
<dbReference type="PRO" id="PR:P03349"/>
<dbReference type="Proteomes" id="UP000007688">
    <property type="component" value="Genome"/>
</dbReference>
<dbReference type="GO" id="GO:0042025">
    <property type="term" value="C:host cell nucleus"/>
    <property type="evidence" value="ECO:0007669"/>
    <property type="project" value="UniProtKB-SubCell"/>
</dbReference>
<dbReference type="GO" id="GO:0020002">
    <property type="term" value="C:host cell plasma membrane"/>
    <property type="evidence" value="ECO:0007669"/>
    <property type="project" value="UniProtKB-SubCell"/>
</dbReference>
<dbReference type="GO" id="GO:0072494">
    <property type="term" value="C:host multivesicular body"/>
    <property type="evidence" value="ECO:0007669"/>
    <property type="project" value="UniProtKB-SubCell"/>
</dbReference>
<dbReference type="GO" id="GO:0016020">
    <property type="term" value="C:membrane"/>
    <property type="evidence" value="ECO:0007669"/>
    <property type="project" value="UniProtKB-KW"/>
</dbReference>
<dbReference type="GO" id="GO:0019013">
    <property type="term" value="C:viral nucleocapsid"/>
    <property type="evidence" value="ECO:0007669"/>
    <property type="project" value="UniProtKB-KW"/>
</dbReference>
<dbReference type="GO" id="GO:0055036">
    <property type="term" value="C:virion membrane"/>
    <property type="evidence" value="ECO:0007669"/>
    <property type="project" value="UniProtKB-SubCell"/>
</dbReference>
<dbReference type="GO" id="GO:0003723">
    <property type="term" value="F:RNA binding"/>
    <property type="evidence" value="ECO:0007669"/>
    <property type="project" value="UniProtKB-KW"/>
</dbReference>
<dbReference type="GO" id="GO:0005198">
    <property type="term" value="F:structural molecule activity"/>
    <property type="evidence" value="ECO:0007669"/>
    <property type="project" value="InterPro"/>
</dbReference>
<dbReference type="GO" id="GO:0008270">
    <property type="term" value="F:zinc ion binding"/>
    <property type="evidence" value="ECO:0007669"/>
    <property type="project" value="UniProtKB-KW"/>
</dbReference>
<dbReference type="GO" id="GO:0039702">
    <property type="term" value="P:viral budding via host ESCRT complex"/>
    <property type="evidence" value="ECO:0007669"/>
    <property type="project" value="UniProtKB-KW"/>
</dbReference>
<dbReference type="GO" id="GO:0075523">
    <property type="term" value="P:viral translational frameshifting"/>
    <property type="evidence" value="ECO:0007669"/>
    <property type="project" value="UniProtKB-KW"/>
</dbReference>
<dbReference type="FunFam" id="1.10.1200.30:FF:000001">
    <property type="entry name" value="Gag polyprotein"/>
    <property type="match status" value="1"/>
</dbReference>
<dbReference type="FunFam" id="1.10.150.90:FF:000001">
    <property type="entry name" value="Gag polyprotein"/>
    <property type="match status" value="1"/>
</dbReference>
<dbReference type="FunFam" id="1.10.375.10:FF:000001">
    <property type="entry name" value="Gag polyprotein"/>
    <property type="match status" value="1"/>
</dbReference>
<dbReference type="FunFam" id="1.20.5.760:FF:000001">
    <property type="entry name" value="Gag polyprotein"/>
    <property type="match status" value="1"/>
</dbReference>
<dbReference type="FunFam" id="4.10.60.10:FF:000001">
    <property type="entry name" value="Gag polyprotein"/>
    <property type="match status" value="1"/>
</dbReference>
<dbReference type="Gene3D" id="1.10.1200.30">
    <property type="match status" value="1"/>
</dbReference>
<dbReference type="Gene3D" id="6.10.250.390">
    <property type="match status" value="1"/>
</dbReference>
<dbReference type="Gene3D" id="1.10.375.10">
    <property type="entry name" value="Human Immunodeficiency Virus Type 1 Capsid Protein"/>
    <property type="match status" value="1"/>
</dbReference>
<dbReference type="Gene3D" id="1.10.150.90">
    <property type="entry name" value="Immunodeficiency lentiviruses, gag gene matrix protein p17"/>
    <property type="match status" value="1"/>
</dbReference>
<dbReference type="Gene3D" id="1.20.5.760">
    <property type="entry name" value="Single helix bin"/>
    <property type="match status" value="1"/>
</dbReference>
<dbReference type="Gene3D" id="4.10.60.10">
    <property type="entry name" value="Zinc finger, CCHC-type"/>
    <property type="match status" value="1"/>
</dbReference>
<dbReference type="InterPro" id="IPR045345">
    <property type="entry name" value="Gag_p24_C"/>
</dbReference>
<dbReference type="InterPro" id="IPR014817">
    <property type="entry name" value="Gag_p6"/>
</dbReference>
<dbReference type="InterPro" id="IPR000071">
    <property type="entry name" value="Lentvrl_matrix_N"/>
</dbReference>
<dbReference type="InterPro" id="IPR012344">
    <property type="entry name" value="Matrix_HIV/RSV_N"/>
</dbReference>
<dbReference type="InterPro" id="IPR050195">
    <property type="entry name" value="Primate_lentivir_Gag_pol-like"/>
</dbReference>
<dbReference type="InterPro" id="IPR008916">
    <property type="entry name" value="Retrov_capsid_C"/>
</dbReference>
<dbReference type="InterPro" id="IPR008919">
    <property type="entry name" value="Retrov_capsid_N"/>
</dbReference>
<dbReference type="InterPro" id="IPR010999">
    <property type="entry name" value="Retrovr_matrix"/>
</dbReference>
<dbReference type="InterPro" id="IPR001878">
    <property type="entry name" value="Znf_CCHC"/>
</dbReference>
<dbReference type="InterPro" id="IPR036875">
    <property type="entry name" value="Znf_CCHC_sf"/>
</dbReference>
<dbReference type="PANTHER" id="PTHR40389:SF4">
    <property type="match status" value="1"/>
</dbReference>
<dbReference type="PANTHER" id="PTHR40389">
    <property type="entry name" value="ENDOGENOUS RETROVIRUS GROUP K MEMBER 24 GAG POLYPROTEIN-RELATED"/>
    <property type="match status" value="1"/>
</dbReference>
<dbReference type="Pfam" id="PF00540">
    <property type="entry name" value="Gag_p17"/>
    <property type="match status" value="1"/>
</dbReference>
<dbReference type="Pfam" id="PF00607">
    <property type="entry name" value="Gag_p24"/>
    <property type="match status" value="1"/>
</dbReference>
<dbReference type="Pfam" id="PF19317">
    <property type="entry name" value="Gag_p24_C"/>
    <property type="match status" value="1"/>
</dbReference>
<dbReference type="Pfam" id="PF08705">
    <property type="entry name" value="Gag_p6"/>
    <property type="match status" value="1"/>
</dbReference>
<dbReference type="Pfam" id="PF00098">
    <property type="entry name" value="zf-CCHC"/>
    <property type="match status" value="2"/>
</dbReference>
<dbReference type="PRINTS" id="PR00234">
    <property type="entry name" value="HIV1MATRIX"/>
</dbReference>
<dbReference type="SMART" id="SM00343">
    <property type="entry name" value="ZnF_C2HC"/>
    <property type="match status" value="2"/>
</dbReference>
<dbReference type="SUPFAM" id="SSF47836">
    <property type="entry name" value="Retroviral matrix proteins"/>
    <property type="match status" value="1"/>
</dbReference>
<dbReference type="SUPFAM" id="SSF47353">
    <property type="entry name" value="Retrovirus capsid dimerization domain-like"/>
    <property type="match status" value="1"/>
</dbReference>
<dbReference type="SUPFAM" id="SSF47943">
    <property type="entry name" value="Retrovirus capsid protein, N-terminal core domain"/>
    <property type="match status" value="1"/>
</dbReference>
<dbReference type="SUPFAM" id="SSF57756">
    <property type="entry name" value="Retrovirus zinc finger-like domains"/>
    <property type="match status" value="1"/>
</dbReference>
<dbReference type="PROSITE" id="PS50158">
    <property type="entry name" value="ZF_CCHC"/>
    <property type="match status" value="2"/>
</dbReference>
<protein>
    <recommendedName>
        <fullName>Gag polyprotein</fullName>
    </recommendedName>
    <alternativeName>
        <fullName>Pr55Gag</fullName>
    </alternativeName>
    <component>
        <recommendedName>
            <fullName>Matrix protein p17</fullName>
            <shortName>MA</shortName>
        </recommendedName>
    </component>
    <component>
        <recommendedName>
            <fullName>Capsid protein p24</fullName>
            <shortName>CA</shortName>
        </recommendedName>
    </component>
    <component>
        <recommendedName>
            <fullName evidence="5">Spacer peptide 1</fullName>
            <shortName>SP1</shortName>
        </recommendedName>
        <alternativeName>
            <fullName>p2</fullName>
        </alternativeName>
    </component>
    <component>
        <recommendedName>
            <fullName>Nucleocapsid protein p7</fullName>
            <shortName>NC</shortName>
        </recommendedName>
    </component>
    <component>
        <recommendedName>
            <fullName evidence="5">Spacer peptide 2</fullName>
            <shortName>SP2</shortName>
        </recommendedName>
        <alternativeName>
            <fullName>p1</fullName>
        </alternativeName>
    </component>
    <component>
        <recommendedName>
            <fullName>p6-gag</fullName>
        </recommendedName>
    </component>
</protein>
<proteinExistence type="evidence at protein level"/>